<feature type="chain" id="PRO_0000076653" description="Aconitate hydratase">
    <location>
        <begin position="1" status="less than"/>
        <end position="764"/>
    </location>
</feature>
<feature type="binding site" evidence="1">
    <location>
        <begin position="75"/>
        <end position="77"/>
    </location>
    <ligand>
        <name>substrate</name>
    </ligand>
</feature>
<feature type="binding site" evidence="1">
    <location>
        <position position="307"/>
    </location>
    <ligand>
        <name>[4Fe-4S] cluster</name>
        <dbReference type="ChEBI" id="CHEBI:49883"/>
    </ligand>
</feature>
<feature type="binding site" evidence="1">
    <location>
        <position position="372"/>
    </location>
    <ligand>
        <name>[4Fe-4S] cluster</name>
        <dbReference type="ChEBI" id="CHEBI:49883"/>
    </ligand>
</feature>
<feature type="binding site" evidence="1">
    <location>
        <position position="375"/>
    </location>
    <ligand>
        <name>[4Fe-4S] cluster</name>
        <dbReference type="ChEBI" id="CHEBI:49883"/>
    </ligand>
</feature>
<feature type="binding site" evidence="1">
    <location>
        <position position="405"/>
    </location>
    <ligand>
        <name>substrate</name>
    </ligand>
</feature>
<feature type="binding site" evidence="1">
    <location>
        <position position="410"/>
    </location>
    <ligand>
        <name>substrate</name>
    </ligand>
</feature>
<feature type="binding site" evidence="1">
    <location>
        <position position="568"/>
    </location>
    <ligand>
        <name>substrate</name>
    </ligand>
</feature>
<feature type="binding site" evidence="1">
    <location>
        <begin position="648"/>
        <end position="649"/>
    </location>
    <ligand>
        <name>substrate</name>
    </ligand>
</feature>
<feature type="non-terminal residue">
    <location>
        <position position="1"/>
    </location>
</feature>
<gene>
    <name type="primary">ACO</name>
</gene>
<reference key="1">
    <citation type="journal article" date="1995" name="J. Biol. Chem.">
        <title>Structure, genomic organization, and expression of the Arabidopsis thaliana aconitase gene. Plant aconitase show significant homology with mammalian iron-responsive element-binding protein.</title>
        <authorList>
            <person name="Peyret P."/>
            <person name="Perez P."/>
            <person name="Alric M."/>
        </authorList>
    </citation>
    <scope>NUCLEOTIDE SEQUENCE [MRNA]</scope>
    <source>
        <strain>cv. Cantaloupe</strain>
        <tissue>Fruit</tissue>
    </source>
</reference>
<evidence type="ECO:0000250" key="1"/>
<evidence type="ECO:0000305" key="2"/>
<comment type="function">
    <text evidence="1">Catalyzes the isomerization of citrate to isocitrate via cis-aconitate.</text>
</comment>
<comment type="catalytic activity">
    <reaction>
        <text>citrate = D-threo-isocitrate</text>
        <dbReference type="Rhea" id="RHEA:10336"/>
        <dbReference type="ChEBI" id="CHEBI:15562"/>
        <dbReference type="ChEBI" id="CHEBI:16947"/>
        <dbReference type="EC" id="4.2.1.3"/>
    </reaction>
</comment>
<comment type="cofactor">
    <cofactor evidence="1">
        <name>[4Fe-4S] cluster</name>
        <dbReference type="ChEBI" id="CHEBI:49883"/>
    </cofactor>
    <text evidence="1">Binds 1 [4Fe-4S] cluster per subunit.</text>
</comment>
<comment type="pathway">
    <text>Carbohydrate metabolism; glyoxylate and dicarboxylate metabolism.</text>
</comment>
<comment type="subcellular location">
    <subcellularLocation>
        <location>Cytoplasm</location>
    </subcellularLocation>
</comment>
<comment type="similarity">
    <text evidence="2">Belongs to the aconitase/IPM isomerase family.</text>
</comment>
<accession>Q42669</accession>
<organism>
    <name type="scientific">Cucumis melo var. conomon</name>
    <name type="common">Oriental pickling melon</name>
    <dbReference type="NCBI Taxonomy" id="3657"/>
    <lineage>
        <taxon>Eukaryota</taxon>
        <taxon>Viridiplantae</taxon>
        <taxon>Streptophyta</taxon>
        <taxon>Embryophyta</taxon>
        <taxon>Tracheophyta</taxon>
        <taxon>Spermatophyta</taxon>
        <taxon>Magnoliopsida</taxon>
        <taxon>eudicotyledons</taxon>
        <taxon>Gunneridae</taxon>
        <taxon>Pentapetalae</taxon>
        <taxon>rosids</taxon>
        <taxon>fabids</taxon>
        <taxon>Cucurbitales</taxon>
        <taxon>Cucurbitaceae</taxon>
        <taxon>Benincaseae</taxon>
        <taxon>Cucumis</taxon>
    </lineage>
</organism>
<name>ACOHC_CUCMC</name>
<keyword id="KW-0004">4Fe-4S</keyword>
<keyword id="KW-0963">Cytoplasm</keyword>
<keyword id="KW-0329">Glyoxylate bypass</keyword>
<keyword id="KW-0408">Iron</keyword>
<keyword id="KW-0411">Iron-sulfur</keyword>
<keyword id="KW-0456">Lyase</keyword>
<keyword id="KW-0479">Metal-binding</keyword>
<protein>
    <recommendedName>
        <fullName>Aconitate hydratase</fullName>
        <shortName>Aconitase</shortName>
        <ecNumber>4.2.1.3</ecNumber>
    </recommendedName>
    <alternativeName>
        <fullName>Citrate hydro-lyase</fullName>
    </alternativeName>
</protein>
<dbReference type="EC" id="4.2.1.3"/>
<dbReference type="EMBL" id="X82840">
    <property type="protein sequence ID" value="CAA58047.1"/>
    <property type="molecule type" value="mRNA"/>
</dbReference>
<dbReference type="PIR" id="S49849">
    <property type="entry name" value="S49849"/>
</dbReference>
<dbReference type="SMR" id="Q42669"/>
<dbReference type="UniPathway" id="UPA00227"/>
<dbReference type="GO" id="GO:0005737">
    <property type="term" value="C:cytoplasm"/>
    <property type="evidence" value="ECO:0007669"/>
    <property type="project" value="UniProtKB-SubCell"/>
</dbReference>
<dbReference type="GO" id="GO:0051539">
    <property type="term" value="F:4 iron, 4 sulfur cluster binding"/>
    <property type="evidence" value="ECO:0007669"/>
    <property type="project" value="UniProtKB-KW"/>
</dbReference>
<dbReference type="GO" id="GO:0003994">
    <property type="term" value="F:aconitate hydratase activity"/>
    <property type="evidence" value="ECO:0007669"/>
    <property type="project" value="UniProtKB-EC"/>
</dbReference>
<dbReference type="GO" id="GO:0046872">
    <property type="term" value="F:metal ion binding"/>
    <property type="evidence" value="ECO:0007669"/>
    <property type="project" value="UniProtKB-KW"/>
</dbReference>
<dbReference type="GO" id="GO:0006097">
    <property type="term" value="P:glyoxylate cycle"/>
    <property type="evidence" value="ECO:0007669"/>
    <property type="project" value="UniProtKB-KW"/>
</dbReference>
<dbReference type="CDD" id="cd01580">
    <property type="entry name" value="AcnA_IRP_Swivel"/>
    <property type="match status" value="1"/>
</dbReference>
<dbReference type="FunFam" id="3.20.19.10:FF:000001">
    <property type="entry name" value="Aconitate hydratase"/>
    <property type="match status" value="1"/>
</dbReference>
<dbReference type="FunFam" id="3.30.499.10:FF:000005">
    <property type="entry name" value="cytoplasmic aconitate hydratase"/>
    <property type="match status" value="1"/>
</dbReference>
<dbReference type="Gene3D" id="6.10.190.10">
    <property type="match status" value="1"/>
</dbReference>
<dbReference type="Gene3D" id="3.30.499.10">
    <property type="entry name" value="Aconitase, domain 3"/>
    <property type="match status" value="2"/>
</dbReference>
<dbReference type="Gene3D" id="3.20.19.10">
    <property type="entry name" value="Aconitase, domain 4"/>
    <property type="match status" value="1"/>
</dbReference>
<dbReference type="InterPro" id="IPR044137">
    <property type="entry name" value="AcnA_IRP_Swivel"/>
</dbReference>
<dbReference type="InterPro" id="IPR015931">
    <property type="entry name" value="Acnase/IPM_dHydase_lsu_aba_1/3"/>
</dbReference>
<dbReference type="InterPro" id="IPR001030">
    <property type="entry name" value="Acoase/IPM_deHydtase_lsu_aba"/>
</dbReference>
<dbReference type="InterPro" id="IPR015928">
    <property type="entry name" value="Aconitase/3IPM_dehydase_swvl"/>
</dbReference>
<dbReference type="InterPro" id="IPR006249">
    <property type="entry name" value="Aconitase/IRP2"/>
</dbReference>
<dbReference type="InterPro" id="IPR018136">
    <property type="entry name" value="Aconitase_4Fe-4S_BS"/>
</dbReference>
<dbReference type="InterPro" id="IPR036008">
    <property type="entry name" value="Aconitase_4Fe-4S_dom"/>
</dbReference>
<dbReference type="InterPro" id="IPR000573">
    <property type="entry name" value="AconitaseA/IPMdHydase_ssu_swvl"/>
</dbReference>
<dbReference type="NCBIfam" id="TIGR01341">
    <property type="entry name" value="aconitase_1"/>
    <property type="match status" value="1"/>
</dbReference>
<dbReference type="NCBIfam" id="NF006757">
    <property type="entry name" value="PRK09277.1"/>
    <property type="match status" value="1"/>
</dbReference>
<dbReference type="NCBIfam" id="NF009520">
    <property type="entry name" value="PRK12881.1"/>
    <property type="match status" value="1"/>
</dbReference>
<dbReference type="PANTHER" id="PTHR11670">
    <property type="entry name" value="ACONITASE/IRON-RESPONSIVE ELEMENT FAMILY MEMBER"/>
    <property type="match status" value="1"/>
</dbReference>
<dbReference type="Pfam" id="PF00330">
    <property type="entry name" value="Aconitase"/>
    <property type="match status" value="1"/>
</dbReference>
<dbReference type="Pfam" id="PF00694">
    <property type="entry name" value="Aconitase_C"/>
    <property type="match status" value="1"/>
</dbReference>
<dbReference type="PRINTS" id="PR00415">
    <property type="entry name" value="ACONITASE"/>
</dbReference>
<dbReference type="SUPFAM" id="SSF53732">
    <property type="entry name" value="Aconitase iron-sulfur domain"/>
    <property type="match status" value="1"/>
</dbReference>
<dbReference type="SUPFAM" id="SSF52016">
    <property type="entry name" value="LeuD/IlvD-like"/>
    <property type="match status" value="1"/>
</dbReference>
<dbReference type="PROSITE" id="PS00450">
    <property type="entry name" value="ACONITASE_1"/>
    <property type="match status" value="1"/>
</dbReference>
<dbReference type="PROSITE" id="PS01244">
    <property type="entry name" value="ACONITASE_2"/>
    <property type="match status" value="1"/>
</dbReference>
<sequence>HEAKTENAVQANMELEFKRNRERFGFLKWGSSAFHNMLVVPPGSGIVHQVNLEYLGRVVFNTNGLLYPDSVVGTDSHTTMIDGLGVAGWGVGGIEAEAAMLGQPMSMVLPGVVGFKLVGKLRNGVTATDLVLTVTQMLRKHGVVGKFVEFYGEGMGELSLADRATIANMSPEYGATMGFFPVDHVTLQYLKLTGRKDETISMIESYLLANKMFVDYSEPQVERVYSSHIELNLSDVEPCISGPKRPHDRVPLKEMKADWHACLDNRVGFKGFAIPKEAQVKVAEFNFHGSPAQLRHGDVVIAAITSCTNTSSSVMLGAALVAKKACELGLEVKPWIKTVLLQALGVVTKYLAKSGLQKYLNQLGFNIVGYGCTTCIGNSGDIDESVASAITGNDIVAAAVLSGNRNFEGRVHPLTRANYLASPPLVVAYALAGTVDIDFESEPIGVGKDGKKVFFRDIWPTSEEVAVVVNSNVLPDMFRATYQAITEGNATWNLLSVPEGTLYSWDPTSTYIHEPPYFKDMSMSPPGPHGVKNAYCLLNFGDSITTDHISPAGSIHKDSPAAKYLLERGVDRRDFNSYGVAVVMMRLWHVHFANIRIVNKLLKGEVGPKTIHIPSREKLSVFDAAMRYKSEGQDTIILAGAEYGIGSSRDWAAKGPMLLGVKAVIAKSFERIHRSNLVGMGIIPLCFKAGEDADSLGLTGHERFTIDLPSNVGEIRPGQDVAVVTDTGKSFSCILRFDTEVELAYFDHGGILQYVIRNLIHSKH</sequence>
<proteinExistence type="evidence at transcript level"/>